<sequence length="991" mass="113686">MTPSSTKKIKQRRSTSCTVCRTIKRKCDGNTPCSNCLKRNQECIYPDVDKRKKRYSIEYITNLENTNQQLHDQLQSLIDLKDNPYQLHLKITEILESSSSFLDNSETKSDSSLGSPELSKSEASLANSFTLGGELVVSSREQGANFHVHLNQQQQQQQPSPQSLSQSSASEVSTRSSPASPNSTISLAPQILRIPSRPFQQQTRQNLLRQSDLPLHYPISGKTSGPNASNITGSIASTISGSRKSSISVDISPPPSLPVFPTSGPTLPTLLPEPLPRNDFDFAPKFFPAPGGKSNMAFGATTVYDADESMVMNVNQIEERWGTGIKLAKLRNVPNIQNRSSSSSSTLIKVNKRTIEEVIKMITNSKAKKYFALAFKYFDRPILCYLIPRGKVIKLYEEICAHKNDLATVEDILGLYPTNQFISIELIAALIASGALYDDNIDCVREYLTLSKTEMFINNSGCLVFNESSYPKLQAMLVCALLELGLGELTTAWELSGIALRMGIDLGFDSFIYDDSDKEIDNLRNLVFWGSYIIDKYAGLIFGRITMLYVDNSVPLIFLPNRQGKLPCLAQLIIDTQPMISSIYETIPETKNDPEMSKKIFLERYNLLQGYNKSLGAWKRGLSREYFWNKSILINTITDESVDHSLKIAYYLIFLIMNKPFLKLPIGSDIDTFIEIVDEMEIIMRYIPDDKHLLNLVVYYALVLMIQSLVAQVSYTNANNYTQNSKFMNQLLFFIDRMGEVLRVDIWLICKKVHSNFQQKVEYLEKLMLDLTEKMEQRRRDEENLMMQQEEFYAQQQQQQQQQQQQPKHEYHDHQQEQEQQEQLQEEHSEKDIKIEIKDEPQPQEEHIHQDYPMKEEEENLNQLSEPQTNEEDNPAEDMLQNEQFMRMVDILFIRGIENDQEEGEEQQQQQQQQEQVQQEQVQQEQVQQDQMELEEDELPQQMPTSPEQPDEPEIPQLPEILDPTFFNSIVDNNGSTFNNIFSFDTEGFRL</sequence>
<feature type="chain" id="PRO_0000459383" description="Transcription factor ROB1">
    <location>
        <begin position="1"/>
        <end position="991"/>
    </location>
</feature>
<feature type="DNA-binding region" description="Zn(2)-C6 fungal-type" evidence="1">
    <location>
        <begin position="17"/>
        <end position="43"/>
    </location>
</feature>
<feature type="region of interest" description="Disordered" evidence="2">
    <location>
        <begin position="150"/>
        <end position="188"/>
    </location>
</feature>
<feature type="region of interest" description="Disordered" evidence="2">
    <location>
        <begin position="792"/>
        <end position="875"/>
    </location>
</feature>
<feature type="region of interest" description="Disordered" evidence="2">
    <location>
        <begin position="901"/>
        <end position="959"/>
    </location>
</feature>
<feature type="compositionally biased region" description="Low complexity" evidence="2">
    <location>
        <begin position="152"/>
        <end position="168"/>
    </location>
</feature>
<feature type="compositionally biased region" description="Polar residues" evidence="2">
    <location>
        <begin position="169"/>
        <end position="187"/>
    </location>
</feature>
<feature type="compositionally biased region" description="Low complexity" evidence="2">
    <location>
        <begin position="795"/>
        <end position="806"/>
    </location>
</feature>
<feature type="compositionally biased region" description="Basic and acidic residues" evidence="2">
    <location>
        <begin position="807"/>
        <end position="817"/>
    </location>
</feature>
<feature type="compositionally biased region" description="Basic and acidic residues" evidence="2">
    <location>
        <begin position="825"/>
        <end position="855"/>
    </location>
</feature>
<feature type="compositionally biased region" description="Low complexity" evidence="2">
    <location>
        <begin position="907"/>
        <end position="931"/>
    </location>
</feature>
<accession>A0A1D8PFP2</accession>
<name>ROB1_CANAL</name>
<protein>
    <recommendedName>
        <fullName evidence="12">Transcription factor ROB1</fullName>
    </recommendedName>
    <alternativeName>
        <fullName evidence="12">Regulator of biofilm 1</fullName>
    </alternativeName>
</protein>
<dbReference type="EMBL" id="CP017623">
    <property type="protein sequence ID" value="AOW26964.1"/>
    <property type="molecule type" value="Genomic_DNA"/>
</dbReference>
<dbReference type="RefSeq" id="XP_019330725.1">
    <property type="nucleotide sequence ID" value="XM_019475180.1"/>
</dbReference>
<dbReference type="SMR" id="A0A1D8PFP2"/>
<dbReference type="STRING" id="237561.A0A1D8PFP2"/>
<dbReference type="EnsemblFungi" id="C1_13620W_A-T">
    <property type="protein sequence ID" value="C1_13620W_A-T-p1"/>
    <property type="gene ID" value="C1_13620W_A"/>
</dbReference>
<dbReference type="GeneID" id="3636212"/>
<dbReference type="KEGG" id="cal:CAALFM_C113620WA"/>
<dbReference type="CGD" id="CAL0000188719">
    <property type="gene designation" value="ROB1"/>
</dbReference>
<dbReference type="VEuPathDB" id="FungiDB:C1_13620W_A"/>
<dbReference type="eggNOG" id="ENOG502QTSE">
    <property type="taxonomic scope" value="Eukaryota"/>
</dbReference>
<dbReference type="InParanoid" id="A0A1D8PFP2"/>
<dbReference type="OMA" id="DIWLICK"/>
<dbReference type="OrthoDB" id="4025267at2759"/>
<dbReference type="PHI-base" id="PHI:10197"/>
<dbReference type="Proteomes" id="UP000000559">
    <property type="component" value="Chromosome 1"/>
</dbReference>
<dbReference type="GO" id="GO:0000785">
    <property type="term" value="C:chromatin"/>
    <property type="evidence" value="ECO:0000314"/>
    <property type="project" value="CGD"/>
</dbReference>
<dbReference type="GO" id="GO:0005634">
    <property type="term" value="C:nucleus"/>
    <property type="evidence" value="ECO:0007669"/>
    <property type="project" value="UniProtKB-SubCell"/>
</dbReference>
<dbReference type="GO" id="GO:0001216">
    <property type="term" value="F:DNA-binding transcription activator activity"/>
    <property type="evidence" value="ECO:0000315"/>
    <property type="project" value="CGD"/>
</dbReference>
<dbReference type="GO" id="GO:0000981">
    <property type="term" value="F:DNA-binding transcription factor activity, RNA polymerase II-specific"/>
    <property type="evidence" value="ECO:0007669"/>
    <property type="project" value="InterPro"/>
</dbReference>
<dbReference type="GO" id="GO:0043565">
    <property type="term" value="F:sequence-specific DNA binding"/>
    <property type="evidence" value="ECO:0000314"/>
    <property type="project" value="CGD"/>
</dbReference>
<dbReference type="GO" id="GO:0008270">
    <property type="term" value="F:zinc ion binding"/>
    <property type="evidence" value="ECO:0007669"/>
    <property type="project" value="InterPro"/>
</dbReference>
<dbReference type="GO" id="GO:0006351">
    <property type="term" value="P:DNA-templated transcription"/>
    <property type="evidence" value="ECO:0007669"/>
    <property type="project" value="InterPro"/>
</dbReference>
<dbReference type="GO" id="GO:0030447">
    <property type="term" value="P:filamentous growth"/>
    <property type="evidence" value="ECO:0000315"/>
    <property type="project" value="CGD"/>
</dbReference>
<dbReference type="GO" id="GO:0036180">
    <property type="term" value="P:filamentous growth of a population of unicellular organisms in response to biotic stimulus"/>
    <property type="evidence" value="ECO:0000315"/>
    <property type="project" value="CGD"/>
</dbReference>
<dbReference type="GO" id="GO:1900445">
    <property type="term" value="P:positive regulation of filamentous growth of a population of unicellular organisms in response to biotic stimulus"/>
    <property type="evidence" value="ECO:0000315"/>
    <property type="project" value="CGD"/>
</dbReference>
<dbReference type="GO" id="GO:1900231">
    <property type="term" value="P:regulation of single-species biofilm formation on inanimate substrate"/>
    <property type="evidence" value="ECO:0000315"/>
    <property type="project" value="CGD"/>
</dbReference>
<dbReference type="GO" id="GO:0006357">
    <property type="term" value="P:regulation of transcription by RNA polymerase II"/>
    <property type="evidence" value="ECO:0000315"/>
    <property type="project" value="CGD"/>
</dbReference>
<dbReference type="GO" id="GO:0044011">
    <property type="term" value="P:single-species biofilm formation on inanimate substrate"/>
    <property type="evidence" value="ECO:0000315"/>
    <property type="project" value="CGD"/>
</dbReference>
<dbReference type="CDD" id="cd12148">
    <property type="entry name" value="fungal_TF_MHR"/>
    <property type="match status" value="1"/>
</dbReference>
<dbReference type="CDD" id="cd00067">
    <property type="entry name" value="GAL4"/>
    <property type="match status" value="1"/>
</dbReference>
<dbReference type="FunFam" id="4.10.240.10:FF:000018">
    <property type="entry name" value="Casein kinase II subunit beta"/>
    <property type="match status" value="1"/>
</dbReference>
<dbReference type="Gene3D" id="4.10.240.10">
    <property type="entry name" value="Zn(2)-C6 fungal-type DNA-binding domain"/>
    <property type="match status" value="1"/>
</dbReference>
<dbReference type="InterPro" id="IPR051615">
    <property type="entry name" value="Transcr_Regulatory_Elem"/>
</dbReference>
<dbReference type="InterPro" id="IPR007219">
    <property type="entry name" value="Transcription_factor_dom_fun"/>
</dbReference>
<dbReference type="InterPro" id="IPR036864">
    <property type="entry name" value="Zn2-C6_fun-type_DNA-bd_sf"/>
</dbReference>
<dbReference type="InterPro" id="IPR001138">
    <property type="entry name" value="Zn2Cys6_DnaBD"/>
</dbReference>
<dbReference type="PANTHER" id="PTHR31313">
    <property type="entry name" value="TY1 ENHANCER ACTIVATOR"/>
    <property type="match status" value="1"/>
</dbReference>
<dbReference type="PANTHER" id="PTHR31313:SF81">
    <property type="entry name" value="TY1 ENHANCER ACTIVATOR"/>
    <property type="match status" value="1"/>
</dbReference>
<dbReference type="Pfam" id="PF04082">
    <property type="entry name" value="Fungal_trans"/>
    <property type="match status" value="1"/>
</dbReference>
<dbReference type="Pfam" id="PF00172">
    <property type="entry name" value="Zn_clus"/>
    <property type="match status" value="1"/>
</dbReference>
<dbReference type="SMART" id="SM00906">
    <property type="entry name" value="Fungal_trans"/>
    <property type="match status" value="1"/>
</dbReference>
<dbReference type="SMART" id="SM00066">
    <property type="entry name" value="GAL4"/>
    <property type="match status" value="1"/>
</dbReference>
<dbReference type="SUPFAM" id="SSF57701">
    <property type="entry name" value="Zn2/Cys6 DNA-binding domain"/>
    <property type="match status" value="1"/>
</dbReference>
<dbReference type="PROSITE" id="PS00463">
    <property type="entry name" value="ZN2_CY6_FUNGAL_1"/>
    <property type="match status" value="1"/>
</dbReference>
<dbReference type="PROSITE" id="PS50048">
    <property type="entry name" value="ZN2_CY6_FUNGAL_2"/>
    <property type="match status" value="1"/>
</dbReference>
<keyword id="KW-0238">DNA-binding</keyword>
<keyword id="KW-0479">Metal-binding</keyword>
<keyword id="KW-0539">Nucleus</keyword>
<keyword id="KW-1185">Reference proteome</keyword>
<keyword id="KW-0804">Transcription</keyword>
<keyword id="KW-0805">Transcription regulation</keyword>
<keyword id="KW-0862">Zinc</keyword>
<reference key="1">
    <citation type="journal article" date="2004" name="Proc. Natl. Acad. Sci. U.S.A.">
        <title>The diploid genome sequence of Candida albicans.</title>
        <authorList>
            <person name="Jones T."/>
            <person name="Federspiel N.A."/>
            <person name="Chibana H."/>
            <person name="Dungan J."/>
            <person name="Kalman S."/>
            <person name="Magee B.B."/>
            <person name="Newport G."/>
            <person name="Thorstenson Y.R."/>
            <person name="Agabian N."/>
            <person name="Magee P.T."/>
            <person name="Davis R.W."/>
            <person name="Scherer S."/>
        </authorList>
    </citation>
    <scope>NUCLEOTIDE SEQUENCE [LARGE SCALE GENOMIC DNA]</scope>
    <source>
        <strain>SC5314 / ATCC MYA-2876</strain>
    </source>
</reference>
<reference key="2">
    <citation type="journal article" date="2007" name="Genome Biol.">
        <title>Assembly of the Candida albicans genome into sixteen supercontigs aligned on the eight chromosomes.</title>
        <authorList>
            <person name="van het Hoog M."/>
            <person name="Rast T.J."/>
            <person name="Martchenko M."/>
            <person name="Grindle S."/>
            <person name="Dignard D."/>
            <person name="Hogues H."/>
            <person name="Cuomo C."/>
            <person name="Berriman M."/>
            <person name="Scherer S."/>
            <person name="Magee B.B."/>
            <person name="Whiteway M."/>
            <person name="Chibana H."/>
            <person name="Nantel A."/>
            <person name="Magee P.T."/>
        </authorList>
    </citation>
    <scope>GENOME REANNOTATION</scope>
    <source>
        <strain>SC5314 / ATCC MYA-2876</strain>
    </source>
</reference>
<reference key="3">
    <citation type="journal article" date="2013" name="Genome Biol.">
        <title>Assembly of a phased diploid Candida albicans genome facilitates allele-specific measurements and provides a simple model for repeat and indel structure.</title>
        <authorList>
            <person name="Muzzey D."/>
            <person name="Schwartz K."/>
            <person name="Weissman J.S."/>
            <person name="Sherlock G."/>
        </authorList>
    </citation>
    <scope>NUCLEOTIDE SEQUENCE [LARGE SCALE GENOMIC DNA]</scope>
    <scope>GENOME REANNOTATION</scope>
    <source>
        <strain>SC5314 / ATCC MYA-2876</strain>
    </source>
</reference>
<reference key="4">
    <citation type="journal article" date="2005" name="Antimicrob. Agents Chemother.">
        <title>Genome-wide expression profiling of the response to azole, polyene, echinocandin, and pyrimidine antifungal agents in Candida albicans.</title>
        <authorList>
            <person name="Liu T.T."/>
            <person name="Lee R.E."/>
            <person name="Barker K.S."/>
            <person name="Lee R.E."/>
            <person name="Wei L."/>
            <person name="Homayouni R."/>
            <person name="Rogers P.D."/>
        </authorList>
    </citation>
    <scope>INDUCTION</scope>
</reference>
<reference key="5">
    <citation type="journal article" date="2009" name="PLoS Genet.">
        <title>A phenotypic profile of the Candida albicans regulatory network.</title>
        <authorList>
            <person name="Homann O.R."/>
            <person name="Dea J."/>
            <person name="Noble S.M."/>
            <person name="Johnson A.D."/>
        </authorList>
    </citation>
    <scope>DISRUPTION PHENOTYPE</scope>
</reference>
<reference key="6">
    <citation type="journal article" date="2012" name="Cell">
        <title>A recently evolved transcriptional network controls biofilm development in Candida albicans.</title>
        <authorList>
            <person name="Nobile C.J."/>
            <person name="Fox E.P."/>
            <person name="Nett J.E."/>
            <person name="Sorrells T.R."/>
            <person name="Mitrovich Q.M."/>
            <person name="Hernday A.D."/>
            <person name="Tuch B.B."/>
            <person name="Andes D.R."/>
            <person name="Johnson A.D."/>
        </authorList>
    </citation>
    <scope>FUNCTION</scope>
    <scope>INDUCTION</scope>
</reference>
<reference key="7">
    <citation type="journal article" date="2013" name="PLoS Pathog.">
        <title>Genetic control of conventional and pheromone-stimulated biofilm formation in Candida albicans.</title>
        <authorList>
            <person name="Lin C.H."/>
            <person name="Kabrawala S."/>
            <person name="Fox E.P."/>
            <person name="Nobile C.J."/>
            <person name="Johnson A.D."/>
            <person name="Bennett R.J."/>
        </authorList>
    </citation>
    <scope>FUNCTION</scope>
    <scope>DISRUPTION PHENOTYPE</scope>
</reference>
<reference key="8">
    <citation type="journal article" date="2015" name="PLoS Biol.">
        <title>Activation and alliance of regulatory pathways in C. albicans during mammalian infection.</title>
        <authorList>
            <person name="Xu W."/>
            <person name="Solis N.V."/>
            <person name="Ehrlich R.L."/>
            <person name="Woolford C.A."/>
            <person name="Filler S.G."/>
            <person name="Mitchell A.P."/>
        </authorList>
    </citation>
    <scope>FUNCTION</scope>
    <scope>INDUCTION</scope>
    <scope>DISRUPTION PHENOTYPE</scope>
</reference>
<reference key="9">
    <citation type="journal article" date="2017" name="PLoS Genet.">
        <title>Genetic analysis of the Candida albicans biofilm transcription factor network using simple and complex haploinsufficiency.</title>
        <authorList>
            <person name="Glazier V.E."/>
            <person name="Murante T."/>
            <person name="Murante D."/>
            <person name="Koselny K."/>
            <person name="Liu Y."/>
            <person name="Kim D."/>
            <person name="Koo H."/>
            <person name="Krysan D.J."/>
        </authorList>
    </citation>
    <scope>FUNCTION</scope>
    <scope>INDUCTION</scope>
</reference>
<reference key="10">
    <citation type="journal article" date="2018" name="PLoS Pathog.">
        <title>Candida albicans Sfl1/Sfl2 regulatory network drives the formation of pathogenic microcolonies.</title>
        <authorList>
            <person name="McCall A.D."/>
            <person name="Kumar R."/>
            <person name="Edgerton M."/>
        </authorList>
    </citation>
    <scope>FUNCTION</scope>
</reference>
<reference key="11">
    <citation type="journal article" date="2021" name="Front. Cell. Infect. Microbiol.">
        <title>The anti-biofilm efficacy of caffeic acid phenethyl ester (CAPE) in vitro and a murine model of oral candidiasis.</title>
        <authorList>
            <person name="de Barros P.P."/>
            <person name="Rossoni R.D."/>
            <person name="Garcia M.T."/>
            <person name="Kaminski V.L."/>
            <person name="Loures F.V."/>
            <person name="Fuchs B.B."/>
            <person name="Mylonakis E."/>
            <person name="Junqueira J.C."/>
        </authorList>
    </citation>
    <scope>FUNCTION</scope>
    <scope>INDUCTION</scope>
</reference>
<reference key="12">
    <citation type="journal article" date="2023" name="Elife">
        <title>Intravital imaging-based genetic screen reveals the transcriptional network governing Candida albicans filamentation during mammalian infection.</title>
        <authorList>
            <person name="Wakade R.S."/>
            <person name="Ristow L.C."/>
            <person name="Wellington M."/>
            <person name="Krysan D.J."/>
        </authorList>
    </citation>
    <scope>FUNCTION</scope>
</reference>
<comment type="function">
    <text evidence="5 6 7 8 9 10 11">Transcription factor that mediates conventional biofilm formation and plays a key role in microcolony formation under both flow and static conditions and to epithelial surfaces (PubMed:22265407, PubMed:23637598, PubMed:28793308, PubMed:30252918, PubMed:36847358). Modulates infection of mammalian hosts (PubMed:25693184, PubMed:34408988, PubMed:36847358).</text>
</comment>
<comment type="subcellular location">
    <subcellularLocation>
        <location evidence="1">Nucleus</location>
    </subcellularLocation>
</comment>
<comment type="induction">
    <text evidence="3 5 7 8 10">Induced during biofilm formation (PubMed:22265407). Expression is dependent on both auto-regulation and cooperative interactions with other network transcription factors such as NDT80, TEC1 and EFG1 (PubMed:28793308). Expression is also induced during mammalian infection (PubMed:25693184). Expression is repressed by caspofungin and caffeic acid phenethyl ester (CAPE) (PubMed:15917516, PubMed:34408988).</text>
</comment>
<comment type="disruption phenotype">
    <text evidence="4 6 7">Severely reduces biofilm formation (PubMed:23637598). Causes defects in proliferation (PubMed:25693184). Displays abnormal colony morphology and invasive growth (PubMed:20041210).</text>
</comment>
<gene>
    <name evidence="12" type="primary">ROB1</name>
    <name type="synonym">CHA4</name>
    <name type="ordered locus">CAALFM_C113620WA</name>
    <name type="ordered locus">orf19.12465</name>
</gene>
<proteinExistence type="evidence at transcript level"/>
<organism>
    <name type="scientific">Candida albicans (strain SC5314 / ATCC MYA-2876)</name>
    <name type="common">Yeast</name>
    <dbReference type="NCBI Taxonomy" id="237561"/>
    <lineage>
        <taxon>Eukaryota</taxon>
        <taxon>Fungi</taxon>
        <taxon>Dikarya</taxon>
        <taxon>Ascomycota</taxon>
        <taxon>Saccharomycotina</taxon>
        <taxon>Pichiomycetes</taxon>
        <taxon>Debaryomycetaceae</taxon>
        <taxon>Candida/Lodderomyces clade</taxon>
        <taxon>Candida</taxon>
    </lineage>
</organism>
<evidence type="ECO:0000255" key="1">
    <source>
        <dbReference type="PROSITE-ProRule" id="PRU00227"/>
    </source>
</evidence>
<evidence type="ECO:0000256" key="2">
    <source>
        <dbReference type="SAM" id="MobiDB-lite"/>
    </source>
</evidence>
<evidence type="ECO:0000269" key="3">
    <source>
    </source>
</evidence>
<evidence type="ECO:0000269" key="4">
    <source>
    </source>
</evidence>
<evidence type="ECO:0000269" key="5">
    <source>
    </source>
</evidence>
<evidence type="ECO:0000269" key="6">
    <source>
    </source>
</evidence>
<evidence type="ECO:0000269" key="7">
    <source>
    </source>
</evidence>
<evidence type="ECO:0000269" key="8">
    <source>
    </source>
</evidence>
<evidence type="ECO:0000269" key="9">
    <source>
    </source>
</evidence>
<evidence type="ECO:0000269" key="10">
    <source>
    </source>
</evidence>
<evidence type="ECO:0000269" key="11">
    <source>
    </source>
</evidence>
<evidence type="ECO:0000303" key="12">
    <source>
    </source>
</evidence>